<dbReference type="EMBL" id="CAID01000015">
    <property type="protein sequence ID" value="CEG01645.1"/>
    <property type="molecule type" value="Genomic_DNA"/>
</dbReference>
<dbReference type="SMR" id="Q00VK4"/>
<dbReference type="FunCoup" id="Q00VK4">
    <property type="interactions" value="1226"/>
</dbReference>
<dbReference type="STRING" id="70448.Q00VK4"/>
<dbReference type="eggNOG" id="KOG0402">
    <property type="taxonomic scope" value="Eukaryota"/>
</dbReference>
<dbReference type="InParanoid" id="Q00VK4"/>
<dbReference type="OrthoDB" id="564175at2759"/>
<dbReference type="Proteomes" id="UP000009170">
    <property type="component" value="Chromosome 15"/>
</dbReference>
<dbReference type="GO" id="GO:1990904">
    <property type="term" value="C:ribonucleoprotein complex"/>
    <property type="evidence" value="ECO:0007669"/>
    <property type="project" value="UniProtKB-KW"/>
</dbReference>
<dbReference type="GO" id="GO:0005840">
    <property type="term" value="C:ribosome"/>
    <property type="evidence" value="ECO:0007669"/>
    <property type="project" value="UniProtKB-KW"/>
</dbReference>
<dbReference type="GO" id="GO:0003735">
    <property type="term" value="F:structural constituent of ribosome"/>
    <property type="evidence" value="ECO:0007669"/>
    <property type="project" value="InterPro"/>
</dbReference>
<dbReference type="GO" id="GO:0008270">
    <property type="term" value="F:zinc ion binding"/>
    <property type="evidence" value="ECO:0007669"/>
    <property type="project" value="UniProtKB-KW"/>
</dbReference>
<dbReference type="GO" id="GO:0006412">
    <property type="term" value="P:translation"/>
    <property type="evidence" value="ECO:0007669"/>
    <property type="project" value="InterPro"/>
</dbReference>
<dbReference type="FunFam" id="2.20.25.30:FF:000002">
    <property type="entry name" value="60S ribosomal protein L37a"/>
    <property type="match status" value="1"/>
</dbReference>
<dbReference type="Gene3D" id="2.20.25.30">
    <property type="match status" value="1"/>
</dbReference>
<dbReference type="HAMAP" id="MF_00327">
    <property type="entry name" value="Ribosomal_eL43"/>
    <property type="match status" value="1"/>
</dbReference>
<dbReference type="InterPro" id="IPR011331">
    <property type="entry name" value="Ribosomal_eL37/eL43"/>
</dbReference>
<dbReference type="InterPro" id="IPR002674">
    <property type="entry name" value="Ribosomal_eL43"/>
</dbReference>
<dbReference type="InterPro" id="IPR050522">
    <property type="entry name" value="Ribosomal_protein_eL43"/>
</dbReference>
<dbReference type="InterPro" id="IPR011332">
    <property type="entry name" value="Ribosomal_zn-bd"/>
</dbReference>
<dbReference type="NCBIfam" id="TIGR00280">
    <property type="entry name" value="eL43_euk_arch"/>
    <property type="match status" value="1"/>
</dbReference>
<dbReference type="PANTHER" id="PTHR48129">
    <property type="entry name" value="60S RIBOSOMAL PROTEIN L37A"/>
    <property type="match status" value="1"/>
</dbReference>
<dbReference type="PANTHER" id="PTHR48129:SF1">
    <property type="entry name" value="LARGE RIBOSOMAL SUBUNIT PROTEIN EL43"/>
    <property type="match status" value="1"/>
</dbReference>
<dbReference type="Pfam" id="PF01780">
    <property type="entry name" value="Ribosomal_L37ae"/>
    <property type="match status" value="1"/>
</dbReference>
<dbReference type="SUPFAM" id="SSF57829">
    <property type="entry name" value="Zn-binding ribosomal proteins"/>
    <property type="match status" value="1"/>
</dbReference>
<keyword id="KW-0479">Metal-binding</keyword>
<keyword id="KW-1185">Reference proteome</keyword>
<keyword id="KW-0687">Ribonucleoprotein</keyword>
<keyword id="KW-0689">Ribosomal protein</keyword>
<keyword id="KW-0862">Zinc</keyword>
<keyword id="KW-0863">Zinc-finger</keyword>
<sequence length="92" mass="10159">MAKRTKKVGIVGKYGTRYGASLRKVVKKTEVSQHSKFFCDFCGKYGMKRQAVGIWCCKGCNKTKAGGAYSLNTGGSVTVRSTIRRLREATEK</sequence>
<evidence type="ECO:0000305" key="1"/>
<evidence type="ECO:0000312" key="2">
    <source>
        <dbReference type="EMBL" id="CEG01645.1"/>
    </source>
</evidence>
<gene>
    <name type="primary">RPL37a</name>
    <name evidence="2" type="ordered locus">Ot15g00045</name>
</gene>
<comment type="similarity">
    <text evidence="1">Belongs to the eukaryotic ribosomal protein eL43 family.</text>
</comment>
<proteinExistence type="inferred from homology"/>
<name>RL37A_OSTTA</name>
<reference key="1">
    <citation type="journal article" date="2006" name="Proc. Natl. Acad. Sci. U.S.A.">
        <title>Genome analysis of the smallest free-living eukaryote Ostreococcus tauri unveils many unique features.</title>
        <authorList>
            <person name="Derelle E."/>
            <person name="Ferraz C."/>
            <person name="Rombauts S."/>
            <person name="Rouze P."/>
            <person name="Worden A.Z."/>
            <person name="Robbens S."/>
            <person name="Partensky F."/>
            <person name="Degroeve S."/>
            <person name="Echeynie S."/>
            <person name="Cooke R."/>
            <person name="Saeys Y."/>
            <person name="Wuyts J."/>
            <person name="Jabbari K."/>
            <person name="Bowler C."/>
            <person name="Panaud O."/>
            <person name="Piegu B."/>
            <person name="Ball S.G."/>
            <person name="Ral J.-P."/>
            <person name="Bouget F.-Y."/>
            <person name="Piganeau G."/>
            <person name="De Baets B."/>
            <person name="Picard A."/>
            <person name="Delseny M."/>
            <person name="Demaille J."/>
            <person name="Van de Peer Y."/>
            <person name="Moreau H."/>
        </authorList>
    </citation>
    <scope>NUCLEOTIDE SEQUENCE [LARGE SCALE GENOMIC DNA]</scope>
    <source>
        <strain>OTTH0595</strain>
    </source>
</reference>
<organism>
    <name type="scientific">Ostreococcus tauri</name>
    <dbReference type="NCBI Taxonomy" id="70448"/>
    <lineage>
        <taxon>Eukaryota</taxon>
        <taxon>Viridiplantae</taxon>
        <taxon>Chlorophyta</taxon>
        <taxon>Mamiellophyceae</taxon>
        <taxon>Mamiellales</taxon>
        <taxon>Bathycoccaceae</taxon>
        <taxon>Ostreococcus</taxon>
    </lineage>
</organism>
<feature type="chain" id="PRO_0000308951" description="Large ribosomal subunit protein eL43">
    <location>
        <begin position="1"/>
        <end position="92"/>
    </location>
</feature>
<feature type="zinc finger region" description="C4-type">
    <location>
        <begin position="39"/>
        <end position="60"/>
    </location>
</feature>
<protein>
    <recommendedName>
        <fullName evidence="1">Large ribosomal subunit protein eL43</fullName>
    </recommendedName>
    <alternativeName>
        <fullName>60S ribosomal protein L37a</fullName>
    </alternativeName>
</protein>
<accession>Q00VK4</accession>
<accession>A0A096PAA0</accession>